<organism>
    <name type="scientific">Pseudoalteromonas carrageenovora</name>
    <name type="common">Alteromonas carrageenovora</name>
    <dbReference type="NCBI Taxonomy" id="227"/>
    <lineage>
        <taxon>Bacteria</taxon>
        <taxon>Pseudomonadati</taxon>
        <taxon>Pseudomonadota</taxon>
        <taxon>Gammaproteobacteria</taxon>
        <taxon>Alteromonadales</taxon>
        <taxon>Pseudoalteromonadaceae</taxon>
        <taxon>Pseudoalteromonas</taxon>
    </lineage>
</organism>
<reference key="1">
    <citation type="journal article" date="1994" name="Gene">
        <title>The gene encoding the kappa-carrageenase of Alteromonas carrageenovora is related to beta-1,3-1,4-glucanases.</title>
        <authorList>
            <person name="Barbeyron T."/>
            <person name="Henrissat B."/>
            <person name="Kloareg B."/>
        </authorList>
    </citation>
    <scope>NUCLEOTIDE SEQUENCE [GENOMIC DNA]</scope>
    <source>
        <strain>ATCC 43555 / DSM 6820 / JCM 8851 / IAM 12662 / NBRC 12985 / NCIMB 302</strain>
    </source>
</reference>
<name>CGKB_PSEVC</name>
<feature type="chain" id="PRO_0000089601" description="Protein CgkB">
    <location>
        <begin position="1"/>
        <end position="57" status="greater than"/>
    </location>
</feature>
<feature type="non-terminal residue">
    <location>
        <position position="57"/>
    </location>
</feature>
<proteinExistence type="predicted"/>
<gene>
    <name type="primary">cgkB</name>
</gene>
<protein>
    <recommendedName>
        <fullName>Protein CgkB</fullName>
    </recommendedName>
</protein>
<dbReference type="EMBL" id="X71620">
    <property type="protein sequence ID" value="CAA50625.1"/>
    <property type="molecule type" value="Genomic_DNA"/>
</dbReference>
<dbReference type="PIR" id="I39508">
    <property type="entry name" value="I39508"/>
</dbReference>
<sequence length="57" mass="6561">MKKVNLSSKWIISISLLIICDYVYLIRTNVNEQANAEATAHMHYKINNTKHSKGKLD</sequence>
<accession>P43479</accession>